<comment type="function">
    <text evidence="1">Mediates the transport of the dicarboxylates fumarate, malate, and succinate across the cytoplasmic membrane via a Na(+)-electrochemical gradient.</text>
</comment>
<comment type="subcellular location">
    <subcellularLocation>
        <location evidence="3">Cell membrane</location>
        <topology evidence="3">Multi-pass membrane protein</topology>
    </subcellularLocation>
</comment>
<comment type="similarity">
    <text evidence="3">Belongs to the SLC13A/DASS transporter (TC 2.A.47) family. NADC subfamily.</text>
</comment>
<accession>Q6GFE0</accession>
<evidence type="ECO:0000250" key="1"/>
<evidence type="ECO:0000255" key="2"/>
<evidence type="ECO:0000305" key="3"/>
<gene>
    <name type="primary">sdcS</name>
    <name type="ordered locus">SAR2009</name>
</gene>
<dbReference type="EMBL" id="BX571856">
    <property type="protein sequence ID" value="CAG40994.1"/>
    <property type="molecule type" value="Genomic_DNA"/>
</dbReference>
<dbReference type="RefSeq" id="WP_000323171.1">
    <property type="nucleotide sequence ID" value="NC_002952.2"/>
</dbReference>
<dbReference type="SMR" id="Q6GFE0"/>
<dbReference type="KEGG" id="sar:SAR2009"/>
<dbReference type="HOGENOM" id="CLU_005170_0_0_9"/>
<dbReference type="Proteomes" id="UP000000596">
    <property type="component" value="Chromosome"/>
</dbReference>
<dbReference type="GO" id="GO:0005886">
    <property type="term" value="C:plasma membrane"/>
    <property type="evidence" value="ECO:0007669"/>
    <property type="project" value="UniProtKB-SubCell"/>
</dbReference>
<dbReference type="GO" id="GO:0008514">
    <property type="term" value="F:organic anion transmembrane transporter activity"/>
    <property type="evidence" value="ECO:0007669"/>
    <property type="project" value="UniProtKB-ARBA"/>
</dbReference>
<dbReference type="GO" id="GO:0015293">
    <property type="term" value="F:symporter activity"/>
    <property type="evidence" value="ECO:0007669"/>
    <property type="project" value="UniProtKB-KW"/>
</dbReference>
<dbReference type="GO" id="GO:1905039">
    <property type="term" value="P:carboxylic acid transmembrane transport"/>
    <property type="evidence" value="ECO:0007669"/>
    <property type="project" value="UniProtKB-ARBA"/>
</dbReference>
<dbReference type="GO" id="GO:0006814">
    <property type="term" value="P:sodium ion transport"/>
    <property type="evidence" value="ECO:0007669"/>
    <property type="project" value="UniProtKB-KW"/>
</dbReference>
<dbReference type="CDD" id="cd01115">
    <property type="entry name" value="SLC13_permease"/>
    <property type="match status" value="1"/>
</dbReference>
<dbReference type="InterPro" id="IPR001898">
    <property type="entry name" value="SLC13A/DASS"/>
</dbReference>
<dbReference type="NCBIfam" id="TIGR00785">
    <property type="entry name" value="dass"/>
    <property type="match status" value="1"/>
</dbReference>
<dbReference type="PANTHER" id="PTHR10283">
    <property type="entry name" value="SOLUTE CARRIER FAMILY 13 MEMBER"/>
    <property type="match status" value="1"/>
</dbReference>
<dbReference type="PANTHER" id="PTHR10283:SF82">
    <property type="entry name" value="SOLUTE CARRIER FAMILY 13 MEMBER 2"/>
    <property type="match status" value="1"/>
</dbReference>
<dbReference type="Pfam" id="PF00939">
    <property type="entry name" value="Na_sulph_symp"/>
    <property type="match status" value="1"/>
</dbReference>
<reference key="1">
    <citation type="journal article" date="2004" name="Proc. Natl. Acad. Sci. U.S.A.">
        <title>Complete genomes of two clinical Staphylococcus aureus strains: evidence for the rapid evolution of virulence and drug resistance.</title>
        <authorList>
            <person name="Holden M.T.G."/>
            <person name="Feil E.J."/>
            <person name="Lindsay J.A."/>
            <person name="Peacock S.J."/>
            <person name="Day N.P.J."/>
            <person name="Enright M.C."/>
            <person name="Foster T.J."/>
            <person name="Moore C.E."/>
            <person name="Hurst L."/>
            <person name="Atkin R."/>
            <person name="Barron A."/>
            <person name="Bason N."/>
            <person name="Bentley S.D."/>
            <person name="Chillingworth C."/>
            <person name="Chillingworth T."/>
            <person name="Churcher C."/>
            <person name="Clark L."/>
            <person name="Corton C."/>
            <person name="Cronin A."/>
            <person name="Doggett J."/>
            <person name="Dowd L."/>
            <person name="Feltwell T."/>
            <person name="Hance Z."/>
            <person name="Harris B."/>
            <person name="Hauser H."/>
            <person name="Holroyd S."/>
            <person name="Jagels K."/>
            <person name="James K.D."/>
            <person name="Lennard N."/>
            <person name="Line A."/>
            <person name="Mayes R."/>
            <person name="Moule S."/>
            <person name="Mungall K."/>
            <person name="Ormond D."/>
            <person name="Quail M.A."/>
            <person name="Rabbinowitsch E."/>
            <person name="Rutherford K.M."/>
            <person name="Sanders M."/>
            <person name="Sharp S."/>
            <person name="Simmonds M."/>
            <person name="Stevens K."/>
            <person name="Whitehead S."/>
            <person name="Barrell B.G."/>
            <person name="Spratt B.G."/>
            <person name="Parkhill J."/>
        </authorList>
    </citation>
    <scope>NUCLEOTIDE SEQUENCE [LARGE SCALE GENOMIC DNA]</scope>
    <source>
        <strain>MRSA252</strain>
    </source>
</reference>
<protein>
    <recommendedName>
        <fullName>Sodium-dependent dicarboxylate transporter SdcS</fullName>
    </recommendedName>
    <alternativeName>
        <fullName>Na(+)/dicarboxylate symporter</fullName>
    </alternativeName>
</protein>
<proteinExistence type="inferred from homology"/>
<sequence length="520" mass="57216">MAYFNQHQSMISKRYLTFFSKSKKKKPFSTGQLIGLILGPLLFLLTLLFFHPQDLPWKGVYVLAITLWIATWWITEAIPIAATSLLPIVLLPLGHILTPEQVSSEYGNDIIFLFLGGFILAIAMERWNLHTRVALTIINLIGASTSKILLGFMVATGFLSMFVSNTAAVMIMIPIGLAIIKEAHDLQEANTNQTSIQKFEKSLVLAIGYAGTIGGLGTLIGTPPLIILKGQYMQHFGHEISFAKWMIVGIPTVIVLLGITWLYLRYVAFRHDLKYLPGGQTLIKQKLDELGKMKYEEKVVQTIFVLASLLWITREFLLKKWEVTSSVADGTIAIFISILLFIIPAKNTEKHRRIIDWEVAKELPWGVLILFGGGLALAKGISESGLAKWLGEQLKSLNGVSPILIVIVITIFVLFLTEVTSNTATATMILPILATLSVAVGVHPLLLMAPAAMAANCAYMLPVGTPPNAIIFGSGKISIKQMASVGFWVNLISAIIIILVVYYIMPIVLGIDINQPLPLK</sequence>
<keyword id="KW-1003">Cell membrane</keyword>
<keyword id="KW-0406">Ion transport</keyword>
<keyword id="KW-0472">Membrane</keyword>
<keyword id="KW-0915">Sodium</keyword>
<keyword id="KW-0739">Sodium transport</keyword>
<keyword id="KW-0769">Symport</keyword>
<keyword id="KW-0812">Transmembrane</keyword>
<keyword id="KW-1133">Transmembrane helix</keyword>
<keyword id="KW-0813">Transport</keyword>
<organism>
    <name type="scientific">Staphylococcus aureus (strain MRSA252)</name>
    <dbReference type="NCBI Taxonomy" id="282458"/>
    <lineage>
        <taxon>Bacteria</taxon>
        <taxon>Bacillati</taxon>
        <taxon>Bacillota</taxon>
        <taxon>Bacilli</taxon>
        <taxon>Bacillales</taxon>
        <taxon>Staphylococcaceae</taxon>
        <taxon>Staphylococcus</taxon>
    </lineage>
</organism>
<feature type="chain" id="PRO_0000260093" description="Sodium-dependent dicarboxylate transporter SdcS">
    <location>
        <begin position="1"/>
        <end position="520"/>
    </location>
</feature>
<feature type="transmembrane region" description="Helical" evidence="2">
    <location>
        <begin position="30"/>
        <end position="50"/>
    </location>
</feature>
<feature type="transmembrane region" description="Helical" evidence="2">
    <location>
        <begin position="55"/>
        <end position="75"/>
    </location>
</feature>
<feature type="transmembrane region" description="Helical" evidence="2">
    <location>
        <begin position="77"/>
        <end position="97"/>
    </location>
</feature>
<feature type="transmembrane region" description="Helical" evidence="2">
    <location>
        <begin position="104"/>
        <end position="124"/>
    </location>
</feature>
<feature type="transmembrane region" description="Helical" evidence="2">
    <location>
        <begin position="160"/>
        <end position="180"/>
    </location>
</feature>
<feature type="transmembrane region" description="Helical" evidence="2">
    <location>
        <begin position="207"/>
        <end position="227"/>
    </location>
</feature>
<feature type="transmembrane region" description="Helical" evidence="2">
    <location>
        <begin position="242"/>
        <end position="262"/>
    </location>
</feature>
<feature type="transmembrane region" description="Helical" evidence="2">
    <location>
        <begin position="298"/>
        <end position="318"/>
    </location>
</feature>
<feature type="transmembrane region" description="Helical" evidence="2">
    <location>
        <begin position="323"/>
        <end position="343"/>
    </location>
</feature>
<feature type="transmembrane region" description="Helical" evidence="2">
    <location>
        <begin position="362"/>
        <end position="382"/>
    </location>
</feature>
<feature type="transmembrane region" description="Helical" evidence="2">
    <location>
        <begin position="399"/>
        <end position="419"/>
    </location>
</feature>
<feature type="transmembrane region" description="Helical" evidence="2">
    <location>
        <begin position="428"/>
        <end position="448"/>
    </location>
</feature>
<feature type="transmembrane region" description="Helical" evidence="2">
    <location>
        <begin position="452"/>
        <end position="472"/>
    </location>
</feature>
<feature type="transmembrane region" description="Helical" evidence="2">
    <location>
        <begin position="491"/>
        <end position="511"/>
    </location>
</feature>
<name>SDCS_STAAR</name>